<sequence>TDIPQTMQDLDLQEVAGRWHSVAMVASDISLLDSESAPLRVYVEELRPTPEGNLEIILREGANHVCVERNIVAQKTEDPAVFTVNYQGERKISVLDTDYAHYMFFCVGPCLPSAEHGMVCQYLARTQKVDEEVMEKFSRALQPLPGHVQIIQDPSGGQERCGF</sequence>
<accession>P19647</accession>
<feature type="chain" id="PRO_0000201016" description="Beta-lactoglobulin-2">
    <location>
        <begin position="1"/>
        <end position="163"/>
    </location>
</feature>
<feature type="disulfide bond" evidence="1">
    <location>
        <begin position="66"/>
        <end position="161"/>
    </location>
</feature>
<feature type="disulfide bond" evidence="1">
    <location>
        <begin position="106"/>
        <end position="120"/>
    </location>
</feature>
<feature type="sequence variant" description="In D." evidence="1">
    <original>C</original>
    <variation>P</variation>
    <location>
        <position position="110"/>
    </location>
</feature>
<feature type="sequence variant" description="In D." evidence="1">
    <original>G</original>
    <variation>D</variation>
    <location>
        <position position="162"/>
    </location>
</feature>
<evidence type="ECO:0000269" key="1">
    <source>
    </source>
</evidence>
<evidence type="ECO:0000305" key="2"/>
<name>LACB2_EQUAS</name>
<proteinExistence type="evidence at protein level"/>
<organism>
    <name type="scientific">Equus asinus</name>
    <name type="common">Donkey</name>
    <name type="synonym">Equus africanus asinus</name>
    <dbReference type="NCBI Taxonomy" id="9793"/>
    <lineage>
        <taxon>Eukaryota</taxon>
        <taxon>Metazoa</taxon>
        <taxon>Chordata</taxon>
        <taxon>Craniata</taxon>
        <taxon>Vertebrata</taxon>
        <taxon>Euteleostomi</taxon>
        <taxon>Mammalia</taxon>
        <taxon>Eutheria</taxon>
        <taxon>Laurasiatheria</taxon>
        <taxon>Perissodactyla</taxon>
        <taxon>Equidae</taxon>
        <taxon>Equus</taxon>
    </lineage>
</organism>
<protein>
    <recommendedName>
        <fullName>Beta-lactoglobulin-2</fullName>
        <shortName>Beta-LG-2</shortName>
    </recommendedName>
    <alternativeName>
        <fullName>Beta-lactoglobulin II, minor monomeric</fullName>
    </alternativeName>
</protein>
<reference key="1">
    <citation type="journal article" date="1990" name="Biol. Chem. Hoppe-Seyler">
        <title>Covalent structure of the minor monomeric beta-lactoglobulin II component from donkey milk.</title>
        <authorList>
            <person name="Godovac-Zimmermann J."/>
            <person name="Conti A."/>
            <person name="Sheil M."/>
            <person name="Napolitano L."/>
        </authorList>
    </citation>
    <scope>PROTEIN SEQUENCE</scope>
    <source>
        <tissue>Milk</tissue>
    </source>
</reference>
<reference key="2">
    <citation type="journal article" date="2007" name="Rapid Commun. Mass Spectrom.">
        <title>Detection and sequence determination of a new variant beta-lactoglobulin II from donkey.</title>
        <authorList>
            <person name="Cunsolo V."/>
            <person name="Costa A."/>
            <person name="Saletti R."/>
            <person name="Muccilli V."/>
            <person name="Foti S."/>
        </authorList>
    </citation>
    <scope>PROTEIN SEQUENCE</scope>
    <scope>MASS SPECTROMETRY</scope>
    <scope>DISULFIDE BONDS</scope>
    <scope>VARIANTS D PRO-110 AND ASP-162</scope>
    <source>
        <strain>Ragusana</strain>
        <tissue>Milk</tissue>
    </source>
</reference>
<dbReference type="PIR" id="S11538">
    <property type="entry name" value="S11538"/>
</dbReference>
<dbReference type="SMR" id="P19647"/>
<dbReference type="Proteomes" id="UP000694387">
    <property type="component" value="Unplaced"/>
</dbReference>
<dbReference type="GO" id="GO:0005576">
    <property type="term" value="C:extracellular region"/>
    <property type="evidence" value="ECO:0007669"/>
    <property type="project" value="UniProtKB-SubCell"/>
</dbReference>
<dbReference type="GO" id="GO:0019841">
    <property type="term" value="F:retinol binding"/>
    <property type="evidence" value="ECO:0007669"/>
    <property type="project" value="UniProtKB-KW"/>
</dbReference>
<dbReference type="CDD" id="cd19416">
    <property type="entry name" value="lipocalin_beta-LG-like"/>
    <property type="match status" value="1"/>
</dbReference>
<dbReference type="Gene3D" id="2.40.128.20">
    <property type="match status" value="1"/>
</dbReference>
<dbReference type="InterPro" id="IPR002447">
    <property type="entry name" value="Blactoglobulin"/>
</dbReference>
<dbReference type="InterPro" id="IPR012674">
    <property type="entry name" value="Calycin"/>
</dbReference>
<dbReference type="InterPro" id="IPR002345">
    <property type="entry name" value="Lipocalin"/>
</dbReference>
<dbReference type="InterPro" id="IPR022272">
    <property type="entry name" value="Lipocalin_CS"/>
</dbReference>
<dbReference type="InterPro" id="IPR000566">
    <property type="entry name" value="Lipocln_cytosolic_FA-bd_dom"/>
</dbReference>
<dbReference type="PANTHER" id="PTHR11430:SF117">
    <property type="entry name" value="GLYCODELIN"/>
    <property type="match status" value="1"/>
</dbReference>
<dbReference type="PANTHER" id="PTHR11430">
    <property type="entry name" value="LIPOCALIN"/>
    <property type="match status" value="1"/>
</dbReference>
<dbReference type="Pfam" id="PF00061">
    <property type="entry name" value="Lipocalin"/>
    <property type="match status" value="1"/>
</dbReference>
<dbReference type="PRINTS" id="PR01172">
    <property type="entry name" value="BLCTOGLOBULN"/>
</dbReference>
<dbReference type="PRINTS" id="PR00179">
    <property type="entry name" value="LIPOCALIN"/>
</dbReference>
<dbReference type="SUPFAM" id="SSF50814">
    <property type="entry name" value="Lipocalins"/>
    <property type="match status" value="1"/>
</dbReference>
<dbReference type="PROSITE" id="PS00213">
    <property type="entry name" value="LIPOCALIN"/>
    <property type="match status" value="1"/>
</dbReference>
<keyword id="KW-0903">Direct protein sequencing</keyword>
<keyword id="KW-1015">Disulfide bond</keyword>
<keyword id="KW-0494">Milk protein</keyword>
<keyword id="KW-1185">Reference proteome</keyword>
<keyword id="KW-0683">Retinol-binding</keyword>
<keyword id="KW-0964">Secreted</keyword>
<keyword id="KW-0813">Transport</keyword>
<comment type="function">
    <text>Lactoglobulin is the primary component of whey, it binds retinol and is probably involved in the transport of that molecule.</text>
</comment>
<comment type="subunit">
    <text>Monomer.</text>
</comment>
<comment type="subcellular location">
    <subcellularLocation>
        <location>Secreted</location>
    </subcellularLocation>
</comment>
<comment type="mass spectrometry">
    <text>Variant D.</text>
</comment>
<comment type="similarity">
    <text evidence="2">Belongs to the calycin superfamily. Lipocalin family.</text>
</comment>
<gene>
    <name type="primary">LGB2</name>
</gene>